<name>SSRP_YERPE</name>
<comment type="function">
    <text evidence="2">Required for rescue of stalled ribosomes mediated by trans-translation. Binds to transfer-messenger RNA (tmRNA), required for stable association of tmRNA with ribosomes. tmRNA and SmpB together mimic tRNA shape, replacing the anticodon stem-loop with SmpB. tmRNA is encoded by the ssrA gene; the 2 termini fold to resemble tRNA(Ala) and it encodes a 'tag peptide', a short internal open reading frame. During trans-translation Ala-aminoacylated tmRNA acts like a tRNA, entering the A-site of stalled ribosomes, displacing the stalled mRNA. The ribosome then switches to translate the ORF on the tmRNA; the nascent peptide is terminated with the 'tag peptide' encoded by the tmRNA and targeted for degradation. The ribosome is freed to recommence translation, which seems to be the essential function of trans-translation.</text>
</comment>
<comment type="subcellular location">
    <subcellularLocation>
        <location evidence="2">Cytoplasm</location>
    </subcellularLocation>
    <text evidence="2">The tmRNA-SmpB complex associates with stalled 70S ribosomes.</text>
</comment>
<comment type="similarity">
    <text evidence="2">Belongs to the SmpB family.</text>
</comment>
<comment type="sequence caution" evidence="3">
    <conflict type="erroneous initiation">
        <sequence resource="EMBL-CDS" id="AAM86629"/>
    </conflict>
    <text>Extended N-terminus.</text>
</comment>
<comment type="sequence caution" evidence="3">
    <conflict type="erroneous initiation">
        <sequence resource="EMBL-CDS" id="AAS61305"/>
    </conflict>
    <text>Extended N-terminus.</text>
</comment>
<evidence type="ECO:0000250" key="1"/>
<evidence type="ECO:0000255" key="2">
    <source>
        <dbReference type="HAMAP-Rule" id="MF_00023"/>
    </source>
</evidence>
<evidence type="ECO:0000305" key="3"/>
<proteinExistence type="inferred from homology"/>
<protein>
    <recommendedName>
        <fullName evidence="2">SsrA-binding protein</fullName>
    </recommendedName>
    <alternativeName>
        <fullName evidence="2">Small protein B</fullName>
    </alternativeName>
</protein>
<gene>
    <name evidence="2" type="primary">smpB</name>
    <name type="ordered locus">YPO1101</name>
    <name type="ordered locus">y3079</name>
    <name type="ordered locus">YP_1055</name>
</gene>
<keyword id="KW-0963">Cytoplasm</keyword>
<keyword id="KW-1185">Reference proteome</keyword>
<keyword id="KW-0694">RNA-binding</keyword>
<feature type="initiator methionine" description="Removed" evidence="1">
    <location>
        <position position="1"/>
    </location>
</feature>
<feature type="chain" id="PRO_0000103076" description="SsrA-binding protein">
    <location>
        <begin position="2"/>
        <end position="160"/>
    </location>
</feature>
<accession>Q8ZH14</accession>
<accession>Q0WHU4</accession>
<sequence length="160" mass="18407">MTKKKAYKPGSATIAQNKRARHEYFIEEEFEAGLALQGWEVKSLRAGKANISDSYVMFKNGEAFLFGATITPLNVASTHVVCEPMRTRKLLLNKRELDSLFGRVNREGYTVVALSMYWKNAWVKVKIGVAKGKKDNDKRDDIRDREWKLDKARIMKHANR</sequence>
<organism>
    <name type="scientific">Yersinia pestis</name>
    <dbReference type="NCBI Taxonomy" id="632"/>
    <lineage>
        <taxon>Bacteria</taxon>
        <taxon>Pseudomonadati</taxon>
        <taxon>Pseudomonadota</taxon>
        <taxon>Gammaproteobacteria</taxon>
        <taxon>Enterobacterales</taxon>
        <taxon>Yersiniaceae</taxon>
        <taxon>Yersinia</taxon>
    </lineage>
</organism>
<dbReference type="EMBL" id="AL590842">
    <property type="protein sequence ID" value="CAL19767.1"/>
    <property type="molecule type" value="Genomic_DNA"/>
</dbReference>
<dbReference type="EMBL" id="AE009952">
    <property type="protein sequence ID" value="AAM86629.1"/>
    <property type="status" value="ALT_INIT"/>
    <property type="molecule type" value="Genomic_DNA"/>
</dbReference>
<dbReference type="EMBL" id="AE017042">
    <property type="protein sequence ID" value="AAS61305.1"/>
    <property type="status" value="ALT_INIT"/>
    <property type="molecule type" value="Genomic_DNA"/>
</dbReference>
<dbReference type="PIR" id="AE0135">
    <property type="entry name" value="AE0135"/>
</dbReference>
<dbReference type="RefSeq" id="WP_002210714.1">
    <property type="nucleotide sequence ID" value="NZ_WUCM01000016.1"/>
</dbReference>
<dbReference type="RefSeq" id="YP_002346144.1">
    <property type="nucleotide sequence ID" value="NC_003143.1"/>
</dbReference>
<dbReference type="SMR" id="Q8ZH14"/>
<dbReference type="STRING" id="214092.YPO1101"/>
<dbReference type="PaxDb" id="214092-YPO1101"/>
<dbReference type="DNASU" id="1148026"/>
<dbReference type="EnsemblBacteria" id="AAS61305">
    <property type="protein sequence ID" value="AAS61305"/>
    <property type="gene ID" value="YP_1055"/>
</dbReference>
<dbReference type="GeneID" id="57977237"/>
<dbReference type="KEGG" id="ype:YPO1101"/>
<dbReference type="KEGG" id="ypj:CH55_3858"/>
<dbReference type="KEGG" id="ypk:y3079"/>
<dbReference type="KEGG" id="ypl:CH46_4036"/>
<dbReference type="KEGG" id="ypm:YP_1055"/>
<dbReference type="KEGG" id="ypv:BZ15_2462"/>
<dbReference type="KEGG" id="ypw:CH59_751"/>
<dbReference type="PATRIC" id="fig|214092.21.peg.1393"/>
<dbReference type="eggNOG" id="COG0691">
    <property type="taxonomic scope" value="Bacteria"/>
</dbReference>
<dbReference type="HOGENOM" id="CLU_108953_3_0_6"/>
<dbReference type="OrthoDB" id="9805462at2"/>
<dbReference type="Proteomes" id="UP000000815">
    <property type="component" value="Chromosome"/>
</dbReference>
<dbReference type="Proteomes" id="UP000001019">
    <property type="component" value="Chromosome"/>
</dbReference>
<dbReference type="Proteomes" id="UP000002490">
    <property type="component" value="Chromosome"/>
</dbReference>
<dbReference type="GO" id="GO:0005829">
    <property type="term" value="C:cytosol"/>
    <property type="evidence" value="ECO:0000318"/>
    <property type="project" value="GO_Central"/>
</dbReference>
<dbReference type="GO" id="GO:0003723">
    <property type="term" value="F:RNA binding"/>
    <property type="evidence" value="ECO:0000318"/>
    <property type="project" value="GO_Central"/>
</dbReference>
<dbReference type="GO" id="GO:0070929">
    <property type="term" value="P:trans-translation"/>
    <property type="evidence" value="ECO:0007669"/>
    <property type="project" value="UniProtKB-UniRule"/>
</dbReference>
<dbReference type="CDD" id="cd09294">
    <property type="entry name" value="SmpB"/>
    <property type="match status" value="1"/>
</dbReference>
<dbReference type="Gene3D" id="2.40.280.10">
    <property type="match status" value="1"/>
</dbReference>
<dbReference type="HAMAP" id="MF_00023">
    <property type="entry name" value="SmpB"/>
    <property type="match status" value="1"/>
</dbReference>
<dbReference type="InterPro" id="IPR023620">
    <property type="entry name" value="SmpB"/>
</dbReference>
<dbReference type="InterPro" id="IPR000037">
    <property type="entry name" value="SsrA-bd_prot"/>
</dbReference>
<dbReference type="InterPro" id="IPR020081">
    <property type="entry name" value="SsrA-bd_prot_CS"/>
</dbReference>
<dbReference type="NCBIfam" id="NF003843">
    <property type="entry name" value="PRK05422.1"/>
    <property type="match status" value="1"/>
</dbReference>
<dbReference type="NCBIfam" id="TIGR00086">
    <property type="entry name" value="smpB"/>
    <property type="match status" value="1"/>
</dbReference>
<dbReference type="PANTHER" id="PTHR30308:SF2">
    <property type="entry name" value="SSRA-BINDING PROTEIN"/>
    <property type="match status" value="1"/>
</dbReference>
<dbReference type="PANTHER" id="PTHR30308">
    <property type="entry name" value="TMRNA-BINDING COMPONENT OF TRANS-TRANSLATION TAGGING COMPLEX"/>
    <property type="match status" value="1"/>
</dbReference>
<dbReference type="Pfam" id="PF01668">
    <property type="entry name" value="SmpB"/>
    <property type="match status" value="1"/>
</dbReference>
<dbReference type="SUPFAM" id="SSF74982">
    <property type="entry name" value="Small protein B (SmpB)"/>
    <property type="match status" value="1"/>
</dbReference>
<dbReference type="PROSITE" id="PS01317">
    <property type="entry name" value="SSRP"/>
    <property type="match status" value="1"/>
</dbReference>
<reference key="1">
    <citation type="journal article" date="2001" name="Nature">
        <title>Genome sequence of Yersinia pestis, the causative agent of plague.</title>
        <authorList>
            <person name="Parkhill J."/>
            <person name="Wren B.W."/>
            <person name="Thomson N.R."/>
            <person name="Titball R.W."/>
            <person name="Holden M.T.G."/>
            <person name="Prentice M.B."/>
            <person name="Sebaihia M."/>
            <person name="James K.D."/>
            <person name="Churcher C.M."/>
            <person name="Mungall K.L."/>
            <person name="Baker S."/>
            <person name="Basham D."/>
            <person name="Bentley S.D."/>
            <person name="Brooks K."/>
            <person name="Cerdeno-Tarraga A.-M."/>
            <person name="Chillingworth T."/>
            <person name="Cronin A."/>
            <person name="Davies R.M."/>
            <person name="Davis P."/>
            <person name="Dougan G."/>
            <person name="Feltwell T."/>
            <person name="Hamlin N."/>
            <person name="Holroyd S."/>
            <person name="Jagels K."/>
            <person name="Karlyshev A.V."/>
            <person name="Leather S."/>
            <person name="Moule S."/>
            <person name="Oyston P.C.F."/>
            <person name="Quail M.A."/>
            <person name="Rutherford K.M."/>
            <person name="Simmonds M."/>
            <person name="Skelton J."/>
            <person name="Stevens K."/>
            <person name="Whitehead S."/>
            <person name="Barrell B.G."/>
        </authorList>
    </citation>
    <scope>NUCLEOTIDE SEQUENCE [LARGE SCALE GENOMIC DNA]</scope>
    <source>
        <strain>CO-92 / Biovar Orientalis</strain>
    </source>
</reference>
<reference key="2">
    <citation type="journal article" date="2002" name="J. Bacteriol.">
        <title>Genome sequence of Yersinia pestis KIM.</title>
        <authorList>
            <person name="Deng W."/>
            <person name="Burland V."/>
            <person name="Plunkett G. III"/>
            <person name="Boutin A."/>
            <person name="Mayhew G.F."/>
            <person name="Liss P."/>
            <person name="Perna N.T."/>
            <person name="Rose D.J."/>
            <person name="Mau B."/>
            <person name="Zhou S."/>
            <person name="Schwartz D.C."/>
            <person name="Fetherston J.D."/>
            <person name="Lindler L.E."/>
            <person name="Brubaker R.R."/>
            <person name="Plano G.V."/>
            <person name="Straley S.C."/>
            <person name="McDonough K.A."/>
            <person name="Nilles M.L."/>
            <person name="Matson J.S."/>
            <person name="Blattner F.R."/>
            <person name="Perry R.D."/>
        </authorList>
    </citation>
    <scope>NUCLEOTIDE SEQUENCE [LARGE SCALE GENOMIC DNA]</scope>
    <source>
        <strain>KIM10+ / Biovar Mediaevalis</strain>
    </source>
</reference>
<reference key="3">
    <citation type="journal article" date="2004" name="DNA Res.">
        <title>Complete genome sequence of Yersinia pestis strain 91001, an isolate avirulent to humans.</title>
        <authorList>
            <person name="Song Y."/>
            <person name="Tong Z."/>
            <person name="Wang J."/>
            <person name="Wang L."/>
            <person name="Guo Z."/>
            <person name="Han Y."/>
            <person name="Zhang J."/>
            <person name="Pei D."/>
            <person name="Zhou D."/>
            <person name="Qin H."/>
            <person name="Pang X."/>
            <person name="Han Y."/>
            <person name="Zhai J."/>
            <person name="Li M."/>
            <person name="Cui B."/>
            <person name="Qi Z."/>
            <person name="Jin L."/>
            <person name="Dai R."/>
            <person name="Chen F."/>
            <person name="Li S."/>
            <person name="Ye C."/>
            <person name="Du Z."/>
            <person name="Lin W."/>
            <person name="Wang J."/>
            <person name="Yu J."/>
            <person name="Yang H."/>
            <person name="Wang J."/>
            <person name="Huang P."/>
            <person name="Yang R."/>
        </authorList>
    </citation>
    <scope>NUCLEOTIDE SEQUENCE [LARGE SCALE GENOMIC DNA]</scope>
    <source>
        <strain>91001 / Biovar Mediaevalis</strain>
    </source>
</reference>